<reference key="1">
    <citation type="journal article" date="2002" name="Nature">
        <title>Sequence and analysis of rice chromosome 4.</title>
        <authorList>
            <person name="Feng Q."/>
            <person name="Zhang Y."/>
            <person name="Hao P."/>
            <person name="Wang S."/>
            <person name="Fu G."/>
            <person name="Huang Y."/>
            <person name="Li Y."/>
            <person name="Zhu J."/>
            <person name="Liu Y."/>
            <person name="Hu X."/>
            <person name="Jia P."/>
            <person name="Zhang Y."/>
            <person name="Zhao Q."/>
            <person name="Ying K."/>
            <person name="Yu S."/>
            <person name="Tang Y."/>
            <person name="Weng Q."/>
            <person name="Zhang L."/>
            <person name="Lu Y."/>
            <person name="Mu J."/>
            <person name="Lu Y."/>
            <person name="Zhang L.S."/>
            <person name="Yu Z."/>
            <person name="Fan D."/>
            <person name="Liu X."/>
            <person name="Lu T."/>
            <person name="Li C."/>
            <person name="Wu Y."/>
            <person name="Sun T."/>
            <person name="Lei H."/>
            <person name="Li T."/>
            <person name="Hu H."/>
            <person name="Guan J."/>
            <person name="Wu M."/>
            <person name="Zhang R."/>
            <person name="Zhou B."/>
            <person name="Chen Z."/>
            <person name="Chen L."/>
            <person name="Jin Z."/>
            <person name="Wang R."/>
            <person name="Yin H."/>
            <person name="Cai Z."/>
            <person name="Ren S."/>
            <person name="Lv G."/>
            <person name="Gu W."/>
            <person name="Zhu G."/>
            <person name="Tu Y."/>
            <person name="Jia J."/>
            <person name="Zhang Y."/>
            <person name="Chen J."/>
            <person name="Kang H."/>
            <person name="Chen X."/>
            <person name="Shao C."/>
            <person name="Sun Y."/>
            <person name="Hu Q."/>
            <person name="Zhang X."/>
            <person name="Zhang W."/>
            <person name="Wang L."/>
            <person name="Ding C."/>
            <person name="Sheng H."/>
            <person name="Gu J."/>
            <person name="Chen S."/>
            <person name="Ni L."/>
            <person name="Zhu F."/>
            <person name="Chen W."/>
            <person name="Lan L."/>
            <person name="Lai Y."/>
            <person name="Cheng Z."/>
            <person name="Gu M."/>
            <person name="Jiang J."/>
            <person name="Li J."/>
            <person name="Hong G."/>
            <person name="Xue Y."/>
            <person name="Han B."/>
        </authorList>
    </citation>
    <scope>NUCLEOTIDE SEQUENCE [LARGE SCALE GENOMIC DNA]</scope>
    <source>
        <strain>cv. Nipponbare</strain>
    </source>
</reference>
<reference key="2">
    <citation type="journal article" date="2005" name="Nature">
        <title>The map-based sequence of the rice genome.</title>
        <authorList>
            <consortium name="International rice genome sequencing project (IRGSP)"/>
        </authorList>
    </citation>
    <scope>NUCLEOTIDE SEQUENCE [LARGE SCALE GENOMIC DNA]</scope>
    <source>
        <strain>cv. Nipponbare</strain>
    </source>
</reference>
<reference key="3">
    <citation type="journal article" date="2008" name="Nucleic Acids Res.">
        <title>The rice annotation project database (RAP-DB): 2008 update.</title>
        <authorList>
            <consortium name="The rice annotation project (RAP)"/>
        </authorList>
    </citation>
    <scope>GENOME REANNOTATION</scope>
    <source>
        <strain>cv. Nipponbare</strain>
    </source>
</reference>
<reference key="4">
    <citation type="journal article" date="2013" name="Rice">
        <title>Improvement of the Oryza sativa Nipponbare reference genome using next generation sequence and optical map data.</title>
        <authorList>
            <person name="Kawahara Y."/>
            <person name="de la Bastide M."/>
            <person name="Hamilton J.P."/>
            <person name="Kanamori H."/>
            <person name="McCombie W.R."/>
            <person name="Ouyang S."/>
            <person name="Schwartz D.C."/>
            <person name="Tanaka T."/>
            <person name="Wu J."/>
            <person name="Zhou S."/>
            <person name="Childs K.L."/>
            <person name="Davidson R.M."/>
            <person name="Lin H."/>
            <person name="Quesada-Ocampo L."/>
            <person name="Vaillancourt B."/>
            <person name="Sakai H."/>
            <person name="Lee S.S."/>
            <person name="Kim J."/>
            <person name="Numa H."/>
            <person name="Itoh T."/>
            <person name="Buell C.R."/>
            <person name="Matsumoto T."/>
        </authorList>
    </citation>
    <scope>GENOME REANNOTATION</scope>
    <source>
        <strain>cv. Nipponbare</strain>
    </source>
</reference>
<reference key="5">
    <citation type="journal article" date="2005" name="PLoS Biol.">
        <title>The genomes of Oryza sativa: a history of duplications.</title>
        <authorList>
            <person name="Yu J."/>
            <person name="Wang J."/>
            <person name="Lin W."/>
            <person name="Li S."/>
            <person name="Li H."/>
            <person name="Zhou J."/>
            <person name="Ni P."/>
            <person name="Dong W."/>
            <person name="Hu S."/>
            <person name="Zeng C."/>
            <person name="Zhang J."/>
            <person name="Zhang Y."/>
            <person name="Li R."/>
            <person name="Xu Z."/>
            <person name="Li S."/>
            <person name="Li X."/>
            <person name="Zheng H."/>
            <person name="Cong L."/>
            <person name="Lin L."/>
            <person name="Yin J."/>
            <person name="Geng J."/>
            <person name="Li G."/>
            <person name="Shi J."/>
            <person name="Liu J."/>
            <person name="Lv H."/>
            <person name="Li J."/>
            <person name="Wang J."/>
            <person name="Deng Y."/>
            <person name="Ran L."/>
            <person name="Shi X."/>
            <person name="Wang X."/>
            <person name="Wu Q."/>
            <person name="Li C."/>
            <person name="Ren X."/>
            <person name="Wang J."/>
            <person name="Wang X."/>
            <person name="Li D."/>
            <person name="Liu D."/>
            <person name="Zhang X."/>
            <person name="Ji Z."/>
            <person name="Zhao W."/>
            <person name="Sun Y."/>
            <person name="Zhang Z."/>
            <person name="Bao J."/>
            <person name="Han Y."/>
            <person name="Dong L."/>
            <person name="Ji J."/>
            <person name="Chen P."/>
            <person name="Wu S."/>
            <person name="Liu J."/>
            <person name="Xiao Y."/>
            <person name="Bu D."/>
            <person name="Tan J."/>
            <person name="Yang L."/>
            <person name="Ye C."/>
            <person name="Zhang J."/>
            <person name="Xu J."/>
            <person name="Zhou Y."/>
            <person name="Yu Y."/>
            <person name="Zhang B."/>
            <person name="Zhuang S."/>
            <person name="Wei H."/>
            <person name="Liu B."/>
            <person name="Lei M."/>
            <person name="Yu H."/>
            <person name="Li Y."/>
            <person name="Xu H."/>
            <person name="Wei S."/>
            <person name="He X."/>
            <person name="Fang L."/>
            <person name="Zhang Z."/>
            <person name="Zhang Y."/>
            <person name="Huang X."/>
            <person name="Su Z."/>
            <person name="Tong W."/>
            <person name="Li J."/>
            <person name="Tong Z."/>
            <person name="Li S."/>
            <person name="Ye J."/>
            <person name="Wang L."/>
            <person name="Fang L."/>
            <person name="Lei T."/>
            <person name="Chen C.-S."/>
            <person name="Chen H.-C."/>
            <person name="Xu Z."/>
            <person name="Li H."/>
            <person name="Huang H."/>
            <person name="Zhang F."/>
            <person name="Xu H."/>
            <person name="Li N."/>
            <person name="Zhao C."/>
            <person name="Li S."/>
            <person name="Dong L."/>
            <person name="Huang Y."/>
            <person name="Li L."/>
            <person name="Xi Y."/>
            <person name="Qi Q."/>
            <person name="Li W."/>
            <person name="Zhang B."/>
            <person name="Hu W."/>
            <person name="Zhang Y."/>
            <person name="Tian X."/>
            <person name="Jiao Y."/>
            <person name="Liang X."/>
            <person name="Jin J."/>
            <person name="Gao L."/>
            <person name="Zheng W."/>
            <person name="Hao B."/>
            <person name="Liu S.-M."/>
            <person name="Wang W."/>
            <person name="Yuan L."/>
            <person name="Cao M."/>
            <person name="McDermott J."/>
            <person name="Samudrala R."/>
            <person name="Wang J."/>
            <person name="Wong G.K.-S."/>
            <person name="Yang H."/>
        </authorList>
    </citation>
    <scope>NUCLEOTIDE SEQUENCE [LARGE SCALE GENOMIC DNA]</scope>
    <source>
        <strain>cv. Nipponbare</strain>
    </source>
</reference>
<reference key="6">
    <citation type="submission" date="2006-10" db="EMBL/GenBank/DDBJ databases">
        <title>Oryza sativa full length cDNA.</title>
        <authorList>
            <consortium name="The rice full-length cDNA consortium"/>
        </authorList>
    </citation>
    <scope>NUCLEOTIDE SEQUENCE [LARGE SCALE MRNA]</scope>
    <source>
        <strain>cv. Nipponbare</strain>
    </source>
</reference>
<reference key="7">
    <citation type="journal article" date="2009" name="Mol. Plant">
        <title>Comparative genomic study of the thioredoxin family in photosynthetic organisms with emphasis on Populus trichocarpa.</title>
        <authorList>
            <person name="Chibani K."/>
            <person name="Wingsle G."/>
            <person name="Jacquot J.P."/>
            <person name="Gelhaye E."/>
            <person name="Rouhier N."/>
        </authorList>
    </citation>
    <scope>GENE FAMILY</scope>
    <scope>NOMENCLATURE</scope>
</reference>
<feature type="chain" id="PRO_0000394841" description="Thioredoxin-like 3-3">
    <location>
        <begin position="1"/>
        <end position="129"/>
    </location>
</feature>
<feature type="domain" description="Thioredoxin" evidence="2">
    <location>
        <begin position="7"/>
        <end position="129"/>
    </location>
</feature>
<feature type="region of interest" description="Disordered" evidence="3">
    <location>
        <begin position="1"/>
        <end position="30"/>
    </location>
</feature>
<feature type="compositionally biased region" description="Basic and acidic residues" evidence="3">
    <location>
        <begin position="1"/>
        <end position="10"/>
    </location>
</feature>
<feature type="compositionally biased region" description="Polar residues" evidence="3">
    <location>
        <begin position="19"/>
        <end position="30"/>
    </location>
</feature>
<feature type="active site" description="Nucleophile" evidence="1">
    <location>
        <position position="58"/>
    </location>
</feature>
<feature type="active site" description="Nucleophile" evidence="1">
    <location>
        <position position="61"/>
    </location>
</feature>
<feature type="disulfide bond" description="Redox-active" evidence="2">
    <location>
        <begin position="58"/>
        <end position="61"/>
    </location>
</feature>
<dbReference type="EMBL" id="AL606687">
    <property type="protein sequence ID" value="CAE01844.2"/>
    <property type="molecule type" value="Genomic_DNA"/>
</dbReference>
<dbReference type="EMBL" id="AP008210">
    <property type="protein sequence ID" value="BAF15458.2"/>
    <property type="molecule type" value="Genomic_DNA"/>
</dbReference>
<dbReference type="EMBL" id="AP014960">
    <property type="protein sequence ID" value="BAS90467.1"/>
    <property type="molecule type" value="Genomic_DNA"/>
</dbReference>
<dbReference type="EMBL" id="CM000141">
    <property type="protein sequence ID" value="EAZ31621.1"/>
    <property type="molecule type" value="Genomic_DNA"/>
</dbReference>
<dbReference type="EMBL" id="AK241774">
    <property type="status" value="NOT_ANNOTATED_CDS"/>
    <property type="molecule type" value="mRNA"/>
</dbReference>
<dbReference type="RefSeq" id="XP_015636121.1">
    <property type="nucleotide sequence ID" value="XM_015780635.1"/>
</dbReference>
<dbReference type="SMR" id="Q7XSQ7"/>
<dbReference type="FunCoup" id="Q7XSQ7">
    <property type="interactions" value="10"/>
</dbReference>
<dbReference type="STRING" id="39947.Q7XSQ7"/>
<dbReference type="PaxDb" id="39947-Q7XSQ7"/>
<dbReference type="EnsemblPlants" id="Os04t0560200-01">
    <property type="protein sequence ID" value="Os04t0560200-01"/>
    <property type="gene ID" value="Os04g0560200"/>
</dbReference>
<dbReference type="Gramene" id="Os04t0560200-01">
    <property type="protein sequence ID" value="Os04t0560200-01"/>
    <property type="gene ID" value="Os04g0560200"/>
</dbReference>
<dbReference type="KEGG" id="dosa:Os04g0560200"/>
<dbReference type="eggNOG" id="KOG0907">
    <property type="taxonomic scope" value="Eukaryota"/>
</dbReference>
<dbReference type="HOGENOM" id="CLU_090389_14_1_1"/>
<dbReference type="InParanoid" id="Q7XSQ7"/>
<dbReference type="OMA" id="CQLSNNF"/>
<dbReference type="OrthoDB" id="2121326at2759"/>
<dbReference type="Proteomes" id="UP000000763">
    <property type="component" value="Chromosome 4"/>
</dbReference>
<dbReference type="Proteomes" id="UP000007752">
    <property type="component" value="Chromosome 4"/>
</dbReference>
<dbReference type="Proteomes" id="UP000059680">
    <property type="component" value="Chromosome 4"/>
</dbReference>
<dbReference type="CDD" id="cd02947">
    <property type="entry name" value="TRX_family"/>
    <property type="match status" value="1"/>
</dbReference>
<dbReference type="Gene3D" id="3.40.30.10">
    <property type="entry name" value="Glutaredoxin"/>
    <property type="match status" value="1"/>
</dbReference>
<dbReference type="InterPro" id="IPR036249">
    <property type="entry name" value="Thioredoxin-like_sf"/>
</dbReference>
<dbReference type="InterPro" id="IPR013766">
    <property type="entry name" value="Thioredoxin_domain"/>
</dbReference>
<dbReference type="InterPro" id="IPR044193">
    <property type="entry name" value="TRL33"/>
</dbReference>
<dbReference type="PANTHER" id="PTHR47571">
    <property type="entry name" value="THIOREDOXIN-LIKE 3-3"/>
    <property type="match status" value="1"/>
</dbReference>
<dbReference type="PANTHER" id="PTHR47571:SF1">
    <property type="entry name" value="THIOREDOXIN-LIKE 3-3"/>
    <property type="match status" value="1"/>
</dbReference>
<dbReference type="Pfam" id="PF00085">
    <property type="entry name" value="Thioredoxin"/>
    <property type="match status" value="1"/>
</dbReference>
<dbReference type="SUPFAM" id="SSF52833">
    <property type="entry name" value="Thioredoxin-like"/>
    <property type="match status" value="1"/>
</dbReference>
<dbReference type="PROSITE" id="PS51352">
    <property type="entry name" value="THIOREDOXIN_2"/>
    <property type="match status" value="1"/>
</dbReference>
<gene>
    <name type="ordered locus">Os04g0560200</name>
    <name type="ordered locus">LOC_Os04g47260</name>
    <name type="ORF">OsJ_15765</name>
    <name type="ORF">OSJNBa0084K11.5</name>
</gene>
<name>TRL33_ORYSJ</name>
<protein>
    <recommendedName>
        <fullName>Thioredoxin-like 3-3</fullName>
    </recommendedName>
    <alternativeName>
        <fullName>Thioredoxin-like 1</fullName>
    </alternativeName>
</protein>
<accession>Q7XSQ7</accession>
<accession>A0A0P0WDF0</accession>
<accession>Q0JB29</accession>
<sequence length="129" mass="14549">MEEGEAKKTGLEGTGLSLPGSSHGNLRSAGSDQQLKQMLDSLKSSKSPAVINYGASWCRVCSQILPPFCRFSNEFKNLTFIYADIDECPETTQNIRYTPTFHFYRDGEKVDEMLGTGEERLHDRLWLHS</sequence>
<comment type="function">
    <text>Probable thiol-disulfide oxidoreductase that may participate in various redox reactions.</text>
</comment>
<comment type="similarity">
    <text evidence="4">Belongs to the thioredoxin family.</text>
</comment>
<comment type="caution">
    <text evidence="4">The active site contains a CRVC motif which differs from the conserved CGPC motif.</text>
</comment>
<proteinExistence type="evidence at transcript level"/>
<keyword id="KW-1015">Disulfide bond</keyword>
<keyword id="KW-0249">Electron transport</keyword>
<keyword id="KW-0676">Redox-active center</keyword>
<keyword id="KW-1185">Reference proteome</keyword>
<keyword id="KW-0813">Transport</keyword>
<organism>
    <name type="scientific">Oryza sativa subsp. japonica</name>
    <name type="common">Rice</name>
    <dbReference type="NCBI Taxonomy" id="39947"/>
    <lineage>
        <taxon>Eukaryota</taxon>
        <taxon>Viridiplantae</taxon>
        <taxon>Streptophyta</taxon>
        <taxon>Embryophyta</taxon>
        <taxon>Tracheophyta</taxon>
        <taxon>Spermatophyta</taxon>
        <taxon>Magnoliopsida</taxon>
        <taxon>Liliopsida</taxon>
        <taxon>Poales</taxon>
        <taxon>Poaceae</taxon>
        <taxon>BOP clade</taxon>
        <taxon>Oryzoideae</taxon>
        <taxon>Oryzeae</taxon>
        <taxon>Oryzinae</taxon>
        <taxon>Oryza</taxon>
        <taxon>Oryza sativa</taxon>
    </lineage>
</organism>
<evidence type="ECO:0000255" key="1"/>
<evidence type="ECO:0000255" key="2">
    <source>
        <dbReference type="PROSITE-ProRule" id="PRU00691"/>
    </source>
</evidence>
<evidence type="ECO:0000256" key="3">
    <source>
        <dbReference type="SAM" id="MobiDB-lite"/>
    </source>
</evidence>
<evidence type="ECO:0000305" key="4"/>